<proteinExistence type="inferred from homology"/>
<protein>
    <recommendedName>
        <fullName evidence="1">Small ribosomal subunit protein uS3</fullName>
    </recommendedName>
    <alternativeName>
        <fullName evidence="3">30S ribosomal protein S3</fullName>
    </alternativeName>
</protein>
<sequence>MGQKVNPNGFRYGITKAHNSVWYADKMQFASHLLEDQKIYDFFDKKVRQLQIGNVQIKRNQNGLILIYVYTAKPAVMLGTNGENIKNLTKDLQKILKNKKANISIQVIELKKPDLNARLLAEDIAIKLENRGSFRLAQKFAIKAALKAGAKGIKTSVSGRLNGVDMARTEGYNEGEMKLHTLRQDVDYAATTAKTTYGILGVKVWVSLGEILSDEQKAKQEEMDLLNAPKDRRVRRGGERHASTKKN</sequence>
<evidence type="ECO:0000255" key="1">
    <source>
        <dbReference type="HAMAP-Rule" id="MF_01309"/>
    </source>
</evidence>
<evidence type="ECO:0000256" key="2">
    <source>
        <dbReference type="SAM" id="MobiDB-lite"/>
    </source>
</evidence>
<evidence type="ECO:0000305" key="3"/>
<accession>B3PMP1</accession>
<reference key="1">
    <citation type="journal article" date="2008" name="Infect. Immun.">
        <title>Genome of Mycoplasma arthritidis.</title>
        <authorList>
            <person name="Dybvig K."/>
            <person name="Zuhua C."/>
            <person name="Lao P."/>
            <person name="Jordan D.S."/>
            <person name="French C.T."/>
            <person name="Tu A.H."/>
            <person name="Loraine A.E."/>
        </authorList>
    </citation>
    <scope>NUCLEOTIDE SEQUENCE [LARGE SCALE GENOMIC DNA]</scope>
    <source>
        <strain>158L3-1</strain>
    </source>
</reference>
<feature type="chain" id="PRO_1000140989" description="Small ribosomal subunit protein uS3">
    <location>
        <begin position="1"/>
        <end position="247"/>
    </location>
</feature>
<feature type="domain" description="KH type-2" evidence="1">
    <location>
        <begin position="39"/>
        <end position="111"/>
    </location>
</feature>
<feature type="region of interest" description="Disordered" evidence="2">
    <location>
        <begin position="221"/>
        <end position="247"/>
    </location>
</feature>
<feature type="compositionally biased region" description="Basic and acidic residues" evidence="2">
    <location>
        <begin position="236"/>
        <end position="247"/>
    </location>
</feature>
<organism>
    <name type="scientific">Metamycoplasma arthritidis (strain 158L3-1)</name>
    <name type="common">Mycoplasma arthritidis</name>
    <dbReference type="NCBI Taxonomy" id="243272"/>
    <lineage>
        <taxon>Bacteria</taxon>
        <taxon>Bacillati</taxon>
        <taxon>Mycoplasmatota</taxon>
        <taxon>Mycoplasmoidales</taxon>
        <taxon>Metamycoplasmataceae</taxon>
        <taxon>Metamycoplasma</taxon>
    </lineage>
</organism>
<gene>
    <name evidence="1" type="primary">rpsC</name>
    <name type="ordered locus">MARTH_orf436</name>
</gene>
<keyword id="KW-1185">Reference proteome</keyword>
<keyword id="KW-0687">Ribonucleoprotein</keyword>
<keyword id="KW-0689">Ribosomal protein</keyword>
<keyword id="KW-0694">RNA-binding</keyword>
<keyword id="KW-0699">rRNA-binding</keyword>
<comment type="function">
    <text evidence="1">Binds the lower part of the 30S subunit head. Binds mRNA in the 70S ribosome, positioning it for translation.</text>
</comment>
<comment type="subunit">
    <text evidence="1">Part of the 30S ribosomal subunit. Forms a tight complex with proteins S10 and S14.</text>
</comment>
<comment type="similarity">
    <text evidence="1">Belongs to the universal ribosomal protein uS3 family.</text>
</comment>
<name>RS3_META1</name>
<dbReference type="EMBL" id="CP001047">
    <property type="protein sequence ID" value="ACF07293.1"/>
    <property type="molecule type" value="Genomic_DNA"/>
</dbReference>
<dbReference type="RefSeq" id="WP_012498250.1">
    <property type="nucleotide sequence ID" value="NC_011025.1"/>
</dbReference>
<dbReference type="SMR" id="B3PMP1"/>
<dbReference type="STRING" id="243272.MARTH_orf436"/>
<dbReference type="KEGG" id="mat:MARTH_orf436"/>
<dbReference type="eggNOG" id="COG0092">
    <property type="taxonomic scope" value="Bacteria"/>
</dbReference>
<dbReference type="HOGENOM" id="CLU_058591_0_2_14"/>
<dbReference type="Proteomes" id="UP000008812">
    <property type="component" value="Chromosome"/>
</dbReference>
<dbReference type="GO" id="GO:0022627">
    <property type="term" value="C:cytosolic small ribosomal subunit"/>
    <property type="evidence" value="ECO:0007669"/>
    <property type="project" value="TreeGrafter"/>
</dbReference>
<dbReference type="GO" id="GO:0003729">
    <property type="term" value="F:mRNA binding"/>
    <property type="evidence" value="ECO:0007669"/>
    <property type="project" value="UniProtKB-UniRule"/>
</dbReference>
<dbReference type="GO" id="GO:0019843">
    <property type="term" value="F:rRNA binding"/>
    <property type="evidence" value="ECO:0007669"/>
    <property type="project" value="UniProtKB-UniRule"/>
</dbReference>
<dbReference type="GO" id="GO:0003735">
    <property type="term" value="F:structural constituent of ribosome"/>
    <property type="evidence" value="ECO:0007669"/>
    <property type="project" value="InterPro"/>
</dbReference>
<dbReference type="GO" id="GO:0006412">
    <property type="term" value="P:translation"/>
    <property type="evidence" value="ECO:0007669"/>
    <property type="project" value="UniProtKB-UniRule"/>
</dbReference>
<dbReference type="CDD" id="cd02412">
    <property type="entry name" value="KH-II_30S_S3"/>
    <property type="match status" value="1"/>
</dbReference>
<dbReference type="FunFam" id="3.30.300.20:FF:000001">
    <property type="entry name" value="30S ribosomal protein S3"/>
    <property type="match status" value="1"/>
</dbReference>
<dbReference type="Gene3D" id="3.30.300.20">
    <property type="match status" value="1"/>
</dbReference>
<dbReference type="Gene3D" id="3.30.1140.32">
    <property type="entry name" value="Ribosomal protein S3, C-terminal domain"/>
    <property type="match status" value="1"/>
</dbReference>
<dbReference type="HAMAP" id="MF_01309_B">
    <property type="entry name" value="Ribosomal_uS3_B"/>
    <property type="match status" value="1"/>
</dbReference>
<dbReference type="InterPro" id="IPR004087">
    <property type="entry name" value="KH_dom"/>
</dbReference>
<dbReference type="InterPro" id="IPR015946">
    <property type="entry name" value="KH_dom-like_a/b"/>
</dbReference>
<dbReference type="InterPro" id="IPR004044">
    <property type="entry name" value="KH_dom_type_2"/>
</dbReference>
<dbReference type="InterPro" id="IPR009019">
    <property type="entry name" value="KH_sf_prok-type"/>
</dbReference>
<dbReference type="InterPro" id="IPR036419">
    <property type="entry name" value="Ribosomal_S3_C_sf"/>
</dbReference>
<dbReference type="InterPro" id="IPR005704">
    <property type="entry name" value="Ribosomal_uS3_bac-typ"/>
</dbReference>
<dbReference type="InterPro" id="IPR001351">
    <property type="entry name" value="Ribosomal_uS3_C"/>
</dbReference>
<dbReference type="InterPro" id="IPR018280">
    <property type="entry name" value="Ribosomal_uS3_CS"/>
</dbReference>
<dbReference type="NCBIfam" id="TIGR01009">
    <property type="entry name" value="rpsC_bact"/>
    <property type="match status" value="1"/>
</dbReference>
<dbReference type="PANTHER" id="PTHR11760">
    <property type="entry name" value="30S/40S RIBOSOMAL PROTEIN S3"/>
    <property type="match status" value="1"/>
</dbReference>
<dbReference type="PANTHER" id="PTHR11760:SF19">
    <property type="entry name" value="SMALL RIBOSOMAL SUBUNIT PROTEIN US3C"/>
    <property type="match status" value="1"/>
</dbReference>
<dbReference type="Pfam" id="PF07650">
    <property type="entry name" value="KH_2"/>
    <property type="match status" value="1"/>
</dbReference>
<dbReference type="Pfam" id="PF00189">
    <property type="entry name" value="Ribosomal_S3_C"/>
    <property type="match status" value="1"/>
</dbReference>
<dbReference type="SMART" id="SM00322">
    <property type="entry name" value="KH"/>
    <property type="match status" value="1"/>
</dbReference>
<dbReference type="SUPFAM" id="SSF54814">
    <property type="entry name" value="Prokaryotic type KH domain (KH-domain type II)"/>
    <property type="match status" value="1"/>
</dbReference>
<dbReference type="SUPFAM" id="SSF54821">
    <property type="entry name" value="Ribosomal protein S3 C-terminal domain"/>
    <property type="match status" value="1"/>
</dbReference>
<dbReference type="PROSITE" id="PS50823">
    <property type="entry name" value="KH_TYPE_2"/>
    <property type="match status" value="1"/>
</dbReference>
<dbReference type="PROSITE" id="PS00548">
    <property type="entry name" value="RIBOSOMAL_S3"/>
    <property type="match status" value="1"/>
</dbReference>